<organism>
    <name type="scientific">Onchocerca volvulus endobacterium</name>
    <dbReference type="NCBI Taxonomy" id="77551"/>
    <lineage>
        <taxon>Bacteria</taxon>
        <taxon>Pseudomonadati</taxon>
        <taxon>Pseudomonadota</taxon>
        <taxon>Alphaproteobacteria</taxon>
        <taxon>Rickettsiales</taxon>
        <taxon>Anaplasmataceae</taxon>
        <taxon>Wolbachieae</taxon>
        <taxon>Wolbachia</taxon>
    </lineage>
</organism>
<proteinExistence type="evidence at transcript level"/>
<feature type="chain" id="PRO_0000084993" description="Catalase">
    <location>
        <begin position="1"/>
        <end position="482"/>
    </location>
</feature>
<feature type="region of interest" description="Disordered" evidence="3">
    <location>
        <begin position="1"/>
        <end position="28"/>
    </location>
</feature>
<feature type="region of interest" description="Disordered" evidence="3">
    <location>
        <begin position="370"/>
        <end position="395"/>
    </location>
</feature>
<feature type="compositionally biased region" description="Polar residues" evidence="3">
    <location>
        <begin position="1"/>
        <end position="23"/>
    </location>
</feature>
<feature type="active site" evidence="2">
    <location>
        <position position="55"/>
    </location>
</feature>
<feature type="active site" evidence="2">
    <location>
        <position position="128"/>
    </location>
</feature>
<feature type="binding site" description="axial binding residue" evidence="1">
    <location>
        <position position="338"/>
    </location>
    <ligand>
        <name>heme</name>
        <dbReference type="ChEBI" id="CHEBI:30413"/>
    </ligand>
    <ligandPart>
        <name>Fe</name>
        <dbReference type="ChEBI" id="CHEBI:18248"/>
    </ligandPart>
</feature>
<keyword id="KW-0349">Heme</keyword>
<keyword id="KW-0376">Hydrogen peroxide</keyword>
<keyword id="KW-0408">Iron</keyword>
<keyword id="KW-0479">Metal-binding</keyword>
<keyword id="KW-0560">Oxidoreductase</keyword>
<keyword id="KW-0575">Peroxidase</keyword>
<gene>
    <name type="primary">cat</name>
</gene>
<reference key="1">
    <citation type="submission" date="1994-10" db="EMBL/GenBank/DDBJ databases">
        <authorList>
            <person name="Henkle-Duehrsen K.J."/>
        </authorList>
    </citation>
    <scope>NUCLEOTIDE SEQUENCE [GENOMIC DNA]</scope>
</reference>
<reference key="2">
    <citation type="submission" date="1998-05" db="EMBL/GenBank/DDBJ databases">
        <title>Gene structure, activity and localization of a catalase from intracellular bacteria in Onchocerca volvulus.</title>
        <authorList>
            <person name="Henkle-Duehrsen K.J."/>
            <person name="Eckelt V.H.O."/>
            <person name="Wildenburg G."/>
            <person name="Blaxter M.L."/>
            <person name="Walter R.D."/>
        </authorList>
    </citation>
    <scope>NUCLEOTIDE SEQUENCE [GENOMIC DNA]</scope>
</reference>
<comment type="function">
    <text>Decomposes hydrogen peroxide into water and oxygen; serves to protect cells from the toxic effects of hydrogen peroxide.</text>
</comment>
<comment type="catalytic activity">
    <reaction evidence="2">
        <text>2 H2O2 = O2 + 2 H2O</text>
        <dbReference type="Rhea" id="RHEA:20309"/>
        <dbReference type="ChEBI" id="CHEBI:15377"/>
        <dbReference type="ChEBI" id="CHEBI:15379"/>
        <dbReference type="ChEBI" id="CHEBI:16240"/>
        <dbReference type="EC" id="1.11.1.6"/>
    </reaction>
</comment>
<comment type="cofactor">
    <cofactor>
        <name>heme</name>
        <dbReference type="ChEBI" id="CHEBI:30413"/>
    </cofactor>
</comment>
<comment type="similarity">
    <text evidence="4">Belongs to the catalase family.</text>
</comment>
<accession>Q27710</accession>
<accession>O85499</accession>
<dbReference type="EC" id="1.11.1.6"/>
<dbReference type="EMBL" id="X82176">
    <property type="protein sequence ID" value="CAA57666.1"/>
    <property type="molecule type" value="mRNA"/>
</dbReference>
<dbReference type="EMBL" id="AF069070">
    <property type="protein sequence ID" value="AAC79431.1"/>
    <property type="molecule type" value="Genomic_DNA"/>
</dbReference>
<dbReference type="PIR" id="S49465">
    <property type="entry name" value="S49465"/>
</dbReference>
<dbReference type="SMR" id="Q27710"/>
<dbReference type="GO" id="GO:0005737">
    <property type="term" value="C:cytoplasm"/>
    <property type="evidence" value="ECO:0007669"/>
    <property type="project" value="TreeGrafter"/>
</dbReference>
<dbReference type="GO" id="GO:0004096">
    <property type="term" value="F:catalase activity"/>
    <property type="evidence" value="ECO:0007669"/>
    <property type="project" value="UniProtKB-EC"/>
</dbReference>
<dbReference type="GO" id="GO:0020037">
    <property type="term" value="F:heme binding"/>
    <property type="evidence" value="ECO:0007669"/>
    <property type="project" value="InterPro"/>
</dbReference>
<dbReference type="GO" id="GO:0046872">
    <property type="term" value="F:metal ion binding"/>
    <property type="evidence" value="ECO:0007669"/>
    <property type="project" value="UniProtKB-KW"/>
</dbReference>
<dbReference type="GO" id="GO:0042744">
    <property type="term" value="P:hydrogen peroxide catabolic process"/>
    <property type="evidence" value="ECO:0007669"/>
    <property type="project" value="UniProtKB-KW"/>
</dbReference>
<dbReference type="GO" id="GO:0042542">
    <property type="term" value="P:response to hydrogen peroxide"/>
    <property type="evidence" value="ECO:0007669"/>
    <property type="project" value="TreeGrafter"/>
</dbReference>
<dbReference type="CDD" id="cd08156">
    <property type="entry name" value="catalase_clade_3"/>
    <property type="match status" value="1"/>
</dbReference>
<dbReference type="FunFam" id="2.40.180.10:FF:000001">
    <property type="entry name" value="Catalase"/>
    <property type="match status" value="1"/>
</dbReference>
<dbReference type="Gene3D" id="2.40.180.10">
    <property type="entry name" value="Catalase core domain"/>
    <property type="match status" value="1"/>
</dbReference>
<dbReference type="InterPro" id="IPR018028">
    <property type="entry name" value="Catalase"/>
</dbReference>
<dbReference type="InterPro" id="IPR040333">
    <property type="entry name" value="Catalase_3"/>
</dbReference>
<dbReference type="InterPro" id="IPR024708">
    <property type="entry name" value="Catalase_AS"/>
</dbReference>
<dbReference type="InterPro" id="IPR024711">
    <property type="entry name" value="Catalase_clade1/3"/>
</dbReference>
<dbReference type="InterPro" id="IPR011614">
    <property type="entry name" value="Catalase_core"/>
</dbReference>
<dbReference type="InterPro" id="IPR002226">
    <property type="entry name" value="Catalase_haem_BS"/>
</dbReference>
<dbReference type="InterPro" id="IPR010582">
    <property type="entry name" value="Catalase_immune_responsive"/>
</dbReference>
<dbReference type="InterPro" id="IPR020835">
    <property type="entry name" value="Catalase_sf"/>
</dbReference>
<dbReference type="PANTHER" id="PTHR11465">
    <property type="entry name" value="CATALASE"/>
    <property type="match status" value="1"/>
</dbReference>
<dbReference type="PANTHER" id="PTHR11465:SF9">
    <property type="entry name" value="CATALASE"/>
    <property type="match status" value="1"/>
</dbReference>
<dbReference type="Pfam" id="PF00199">
    <property type="entry name" value="Catalase"/>
    <property type="match status" value="1"/>
</dbReference>
<dbReference type="Pfam" id="PF06628">
    <property type="entry name" value="Catalase-rel"/>
    <property type="match status" value="1"/>
</dbReference>
<dbReference type="PIRSF" id="PIRSF038928">
    <property type="entry name" value="Catalase_clade1-3"/>
    <property type="match status" value="1"/>
</dbReference>
<dbReference type="PRINTS" id="PR00067">
    <property type="entry name" value="CATALASE"/>
</dbReference>
<dbReference type="SMART" id="SM01060">
    <property type="entry name" value="Catalase"/>
    <property type="match status" value="1"/>
</dbReference>
<dbReference type="SUPFAM" id="SSF56634">
    <property type="entry name" value="Heme-dependent catalase-like"/>
    <property type="match status" value="1"/>
</dbReference>
<dbReference type="PROSITE" id="PS00437">
    <property type="entry name" value="CATALASE_1"/>
    <property type="match status" value="1"/>
</dbReference>
<dbReference type="PROSITE" id="PS00438">
    <property type="entry name" value="CATALASE_2"/>
    <property type="match status" value="1"/>
</dbReference>
<dbReference type="PROSITE" id="PS51402">
    <property type="entry name" value="CATALASE_3"/>
    <property type="match status" value="1"/>
</dbReference>
<evidence type="ECO:0000250" key="1"/>
<evidence type="ECO:0000255" key="2">
    <source>
        <dbReference type="PROSITE-ProRule" id="PRU10013"/>
    </source>
</evidence>
<evidence type="ECO:0000256" key="3">
    <source>
        <dbReference type="SAM" id="MobiDB-lite"/>
    </source>
</evidence>
<evidence type="ECO:0000305" key="4"/>
<protein>
    <recommendedName>
        <fullName>Catalase</fullName>
        <ecNumber>1.11.1.6</ecNumber>
    </recommendedName>
</protein>
<name>CATA_ONCVE</name>
<sequence length="482" mass="53700">MSQNKTLTTASGPPVADNQNSRSAGPRGPLLLDDFHLIEKLAHFNRENIPERRVHAKGSGAYGTFTVTQDITQYTSAKLFDSVGKQTPTFLRFSTVGGERGSADTERDPRGFALKFYTEEGNWDIVGNNTPVFFIRDPLKFPDFIHTQKRLPQSNLKSAQMMWDFWSHSPEALHQVTILFSDRGIPDGYRHMHGFGSHTYSLINAKGERHWVKWHYKTKQGIKNLAPADAARLAGTDPDYAQRDLFGAIERGDFPKWRVCIQIMTEAQANAHYENPFDVTKTWSQKEFPLIEVGELELNRNPLNYFAEVEQAAFGPSNMVPGVGLSPDRMLQGRVFAYADAHRYRVGTNHQQLPVNAPRSPVNSYQRDGSMAFGSNGGAAPNYEPNSYADAPKQAPQYAEPALALSGAADRYDHREDTDYYSHAGALFRLMNDEQKALLINNIAGAMAGVSSDVVQRQLQYFFKADPAYGEGIASALGVSLN</sequence>